<comment type="function">
    <text evidence="1">Mediates the nuclear export of encapsidated genomic RNAs (ribonucleoproteins, RNPs). Acts as an adapter between viral RNPs complexes and the nuclear export machinery of the cell. Possesses no intrinsic RNA-binding activity, but includes a C-terminal M1-binding domain. This domain is believed to allow recognition of RNPs bound to the protein M1. Since protein M1 is not available in large quantities before late stages of infection, such an indirect recognition mechanism probably ensures that genomic RNPs are not exported from the host nucleus until sufficient quantities of viral mRNA and progeny genomic RNA have been synthesized. Furthermore, the RNPs enter the host cytoplasm only when associated with the M1 protein that is necessary to guide them to the plasma membrane. May down-regulate viral RNA synthesis when overproduced.</text>
</comment>
<comment type="subunit">
    <text evidence="1">Interacts with protein M1. May interact with host nucleoporin RAB/HRB and exportin XPO1/CRM1.</text>
</comment>
<comment type="subcellular location">
    <subcellularLocation>
        <location evidence="1">Virion</location>
    </subcellularLocation>
    <subcellularLocation>
        <location evidence="1">Host nucleus</location>
    </subcellularLocation>
</comment>
<comment type="alternative products">
    <event type="alternative splicing"/>
    <isoform>
        <id>P0C5U2-1</id>
        <name>NEP</name>
        <name>NS2</name>
        <sequence type="displayed"/>
    </isoform>
    <isoform>
        <id>Q6J871-1</id>
        <name>NS1</name>
        <sequence type="external"/>
    </isoform>
</comment>
<comment type="miscellaneous">
    <text>Average number present in a viral particle is estimated to be 130-200 molecules.</text>
</comment>
<comment type="similarity">
    <text evidence="1">Belongs to the influenza viruses NEP family.</text>
</comment>
<organism>
    <name type="scientific">Influenza A virus (strain A/Chicken/Hong Kong/96.1/2002 H5N1 genotype Y)</name>
    <dbReference type="NCBI Taxonomy" id="279803"/>
    <lineage>
        <taxon>Viruses</taxon>
        <taxon>Riboviria</taxon>
        <taxon>Orthornavirae</taxon>
        <taxon>Negarnaviricota</taxon>
        <taxon>Polyploviricotina</taxon>
        <taxon>Insthoviricetes</taxon>
        <taxon>Articulavirales</taxon>
        <taxon>Orthomyxoviridae</taxon>
        <taxon>Alphainfluenzavirus</taxon>
        <taxon>Alphainfluenzavirus influenzae</taxon>
        <taxon>Influenza A virus</taxon>
    </lineage>
</organism>
<name>NEP_I02A5</name>
<feature type="chain" id="PRO_0000311736" description="Nuclear export protein">
    <location>
        <begin position="1"/>
        <end position="121"/>
    </location>
</feature>
<feature type="short sequence motif" description="Nuclear export signal" evidence="1">
    <location>
        <begin position="12"/>
        <end position="21"/>
    </location>
</feature>
<feature type="short sequence motif" description="Nuclear export signal" evidence="1">
    <location>
        <begin position="85"/>
        <end position="94"/>
    </location>
</feature>
<sequence>MDSNTVSSFQDILMRMSKMQLASSSEDLNGMITQFESLKLYRDSLGEAVMRMGDFHSLQIRNGKWREQLSQKFEEIRWLIEEVRHRLKITENSFEQITFMQALQLLLEVEQEIRAFSFQLI</sequence>
<evidence type="ECO:0000255" key="1">
    <source>
        <dbReference type="HAMAP-Rule" id="MF_04067"/>
    </source>
</evidence>
<gene>
    <name evidence="1" type="primary">NS</name>
</gene>
<accession>P0C5U2</accession>
<protein>
    <recommendedName>
        <fullName evidence="1">Nuclear export protein</fullName>
        <shortName evidence="1">NEP</shortName>
    </recommendedName>
    <alternativeName>
        <fullName evidence="1">Non-structural protein 2</fullName>
        <shortName evidence="1">NS2</shortName>
    </alternativeName>
</protein>
<reference key="1">
    <citation type="journal article" date="2004" name="Proc. Natl. Acad. Sci. U.S.A.">
        <title>H5N1 influenza: a protean pandemic threat.</title>
        <authorList>
            <person name="Guan Y."/>
            <person name="Poon L.L.M."/>
            <person name="Cheung C.Y."/>
            <person name="Ellis T.M."/>
            <person name="Lim W."/>
            <person name="Lipatov A.S."/>
            <person name="Chan K.H."/>
            <person name="Sturm-Ramirez K.M."/>
            <person name="Cheung C.L."/>
            <person name="Leung Y.H.C."/>
            <person name="Yuen K.Y."/>
            <person name="Webster R.G."/>
            <person name="Peiris J.S.M."/>
        </authorList>
    </citation>
    <scope>NUCLEOTIDE SEQUENCE [GENOMIC RNA]</scope>
</reference>
<keyword id="KW-0025">Alternative splicing</keyword>
<keyword id="KW-1048">Host nucleus</keyword>
<keyword id="KW-0945">Host-virus interaction</keyword>
<keyword id="KW-0813">Transport</keyword>
<keyword id="KW-0946">Virion</keyword>
<organismHost>
    <name type="scientific">Aves</name>
    <dbReference type="NCBI Taxonomy" id="8782"/>
</organismHost>
<organismHost>
    <name type="scientific">Felis catus</name>
    <name type="common">Cat</name>
    <name type="synonym">Felis silvestris catus</name>
    <dbReference type="NCBI Taxonomy" id="9685"/>
</organismHost>
<organismHost>
    <name type="scientific">Homo sapiens</name>
    <name type="common">Human</name>
    <dbReference type="NCBI Taxonomy" id="9606"/>
</organismHost>
<organismHost>
    <name type="scientific">Panthera pardus</name>
    <name type="common">Leopard</name>
    <name type="synonym">Felis pardus</name>
    <dbReference type="NCBI Taxonomy" id="9691"/>
</organismHost>
<organismHost>
    <name type="scientific">Panthera tigris</name>
    <name type="common">Tiger</name>
    <dbReference type="NCBI Taxonomy" id="9694"/>
</organismHost>
<organismHost>
    <name type="scientific">Sus scrofa</name>
    <name type="common">Pig</name>
    <dbReference type="NCBI Taxonomy" id="9823"/>
</organismHost>
<dbReference type="EMBL" id="AY576377">
    <property type="status" value="NOT_ANNOTATED_CDS"/>
    <property type="molecule type" value="Genomic_DNA"/>
</dbReference>
<dbReference type="SMR" id="P0C5U2"/>
<dbReference type="GO" id="GO:0042025">
    <property type="term" value="C:host cell nucleus"/>
    <property type="evidence" value="ECO:0007669"/>
    <property type="project" value="UniProtKB-SubCell"/>
</dbReference>
<dbReference type="GO" id="GO:0044423">
    <property type="term" value="C:virion component"/>
    <property type="evidence" value="ECO:0007669"/>
    <property type="project" value="UniProtKB-UniRule"/>
</dbReference>
<dbReference type="GO" id="GO:0039675">
    <property type="term" value="P:exit of virus from host cell nucleus through nuclear pore"/>
    <property type="evidence" value="ECO:0007669"/>
    <property type="project" value="UniProtKB-UniRule"/>
</dbReference>
<dbReference type="Gene3D" id="1.10.287.230">
    <property type="match status" value="1"/>
</dbReference>
<dbReference type="Gene3D" id="1.10.287.10">
    <property type="entry name" value="S15/NS1, RNA-binding"/>
    <property type="match status" value="1"/>
</dbReference>
<dbReference type="HAMAP" id="MF_04067">
    <property type="entry name" value="INFV_NEP"/>
    <property type="match status" value="1"/>
</dbReference>
<dbReference type="InterPro" id="IPR000968">
    <property type="entry name" value="Flu_NS2"/>
</dbReference>
<dbReference type="Pfam" id="PF00601">
    <property type="entry name" value="Flu_NS2"/>
    <property type="match status" value="1"/>
</dbReference>
<dbReference type="SUPFAM" id="SSF101156">
    <property type="entry name" value="Nonstructural protein ns2, Nep, M1-binding domain"/>
    <property type="match status" value="1"/>
</dbReference>
<proteinExistence type="inferred from homology"/>